<keyword id="KW-0963">Cytoplasm</keyword>
<keyword id="KW-0489">Methyltransferase</keyword>
<keyword id="KW-0698">rRNA processing</keyword>
<keyword id="KW-0949">S-adenosyl-L-methionine</keyword>
<keyword id="KW-0808">Transferase</keyword>
<proteinExistence type="inferred from homology"/>
<sequence>MDLARAELGEMLLYHHESVLTEAVVAYLQPQQGGAFLDVTLGGGGHSLALLQRGADRVVGLDRDPTALQAAQARLAAAGIPGNRLQLWHLNFADFDLQRHGFRDERGQGIPFDGIVADLGVSSPQLDCPERGFSFRAEGPLDMRMDPTADQETAADWVNRRPVEDLIDIFVRYGEERFARRIAHHIERSRPLFTTTQLAHVVWQAVPPAARRGRIHPATRIFQALRIAVNRELEALETLLAQAPNWLKPGGRLAVISFHSLEDRLVKWAFRTDPRWQVLTPKPLCPSELEQQRNSRARSAKLRVAARSS</sequence>
<evidence type="ECO:0000255" key="1">
    <source>
        <dbReference type="HAMAP-Rule" id="MF_01007"/>
    </source>
</evidence>
<evidence type="ECO:0000256" key="2">
    <source>
        <dbReference type="SAM" id="MobiDB-lite"/>
    </source>
</evidence>
<gene>
    <name evidence="1" type="primary">rsmH</name>
    <name type="synonym">mraW</name>
    <name type="ordered locus">CYA_2297</name>
</gene>
<reference key="1">
    <citation type="journal article" date="2007" name="ISME J.">
        <title>Population level functional diversity in a microbial community revealed by comparative genomic and metagenomic analyses.</title>
        <authorList>
            <person name="Bhaya D."/>
            <person name="Grossman A.R."/>
            <person name="Steunou A.-S."/>
            <person name="Khuri N."/>
            <person name="Cohan F.M."/>
            <person name="Hamamura N."/>
            <person name="Melendrez M.C."/>
            <person name="Bateson M.M."/>
            <person name="Ward D.M."/>
            <person name="Heidelberg J.F."/>
        </authorList>
    </citation>
    <scope>NUCLEOTIDE SEQUENCE [LARGE SCALE GENOMIC DNA]</scope>
    <source>
        <strain>JA-3-3Ab</strain>
    </source>
</reference>
<feature type="chain" id="PRO_0000318881" description="Ribosomal RNA small subunit methyltransferase H">
    <location>
        <begin position="1"/>
        <end position="309"/>
    </location>
</feature>
<feature type="region of interest" description="Disordered" evidence="2">
    <location>
        <begin position="289"/>
        <end position="309"/>
    </location>
</feature>
<feature type="binding site" evidence="1">
    <location>
        <begin position="44"/>
        <end position="46"/>
    </location>
    <ligand>
        <name>S-adenosyl-L-methionine</name>
        <dbReference type="ChEBI" id="CHEBI:59789"/>
    </ligand>
</feature>
<feature type="binding site" evidence="1">
    <location>
        <position position="62"/>
    </location>
    <ligand>
        <name>S-adenosyl-L-methionine</name>
        <dbReference type="ChEBI" id="CHEBI:59789"/>
    </ligand>
</feature>
<feature type="binding site" evidence="1">
    <location>
        <position position="102"/>
    </location>
    <ligand>
        <name>S-adenosyl-L-methionine</name>
        <dbReference type="ChEBI" id="CHEBI:59789"/>
    </ligand>
</feature>
<feature type="binding site" evidence="1">
    <location>
        <position position="118"/>
    </location>
    <ligand>
        <name>S-adenosyl-L-methionine</name>
        <dbReference type="ChEBI" id="CHEBI:59789"/>
    </ligand>
</feature>
<feature type="binding site" evidence="1">
    <location>
        <position position="125"/>
    </location>
    <ligand>
        <name>S-adenosyl-L-methionine</name>
        <dbReference type="ChEBI" id="CHEBI:59789"/>
    </ligand>
</feature>
<organism>
    <name type="scientific">Synechococcus sp. (strain JA-3-3Ab)</name>
    <name type="common">Cyanobacteria bacterium Yellowstone A-Prime</name>
    <dbReference type="NCBI Taxonomy" id="321327"/>
    <lineage>
        <taxon>Bacteria</taxon>
        <taxon>Bacillati</taxon>
        <taxon>Cyanobacteriota</taxon>
        <taxon>Cyanophyceae</taxon>
        <taxon>Synechococcales</taxon>
        <taxon>Synechococcaceae</taxon>
        <taxon>Synechococcus</taxon>
    </lineage>
</organism>
<comment type="function">
    <text evidence="1">Specifically methylates the N4 position of cytidine in position 1402 (C1402) of 16S rRNA.</text>
</comment>
<comment type="catalytic activity">
    <reaction evidence="1">
        <text>cytidine(1402) in 16S rRNA + S-adenosyl-L-methionine = N(4)-methylcytidine(1402) in 16S rRNA + S-adenosyl-L-homocysteine + H(+)</text>
        <dbReference type="Rhea" id="RHEA:42928"/>
        <dbReference type="Rhea" id="RHEA-COMP:10286"/>
        <dbReference type="Rhea" id="RHEA-COMP:10287"/>
        <dbReference type="ChEBI" id="CHEBI:15378"/>
        <dbReference type="ChEBI" id="CHEBI:57856"/>
        <dbReference type="ChEBI" id="CHEBI:59789"/>
        <dbReference type="ChEBI" id="CHEBI:74506"/>
        <dbReference type="ChEBI" id="CHEBI:82748"/>
        <dbReference type="EC" id="2.1.1.199"/>
    </reaction>
</comment>
<comment type="subcellular location">
    <subcellularLocation>
        <location evidence="1">Cytoplasm</location>
    </subcellularLocation>
</comment>
<comment type="similarity">
    <text evidence="1">Belongs to the methyltransferase superfamily. RsmH family.</text>
</comment>
<protein>
    <recommendedName>
        <fullName evidence="1">Ribosomal RNA small subunit methyltransferase H</fullName>
        <ecNumber evidence="1">2.1.1.199</ecNumber>
    </recommendedName>
    <alternativeName>
        <fullName evidence="1">16S rRNA m(4)C1402 methyltransferase</fullName>
    </alternativeName>
    <alternativeName>
        <fullName evidence="1">rRNA (cytosine-N(4)-)-methyltransferase RsmH</fullName>
    </alternativeName>
</protein>
<name>RSMH_SYNJA</name>
<dbReference type="EC" id="2.1.1.199" evidence="1"/>
<dbReference type="EMBL" id="CP000239">
    <property type="protein sequence ID" value="ABD00431.1"/>
    <property type="molecule type" value="Genomic_DNA"/>
</dbReference>
<dbReference type="RefSeq" id="WP_011431104.1">
    <property type="nucleotide sequence ID" value="NC_007775.1"/>
</dbReference>
<dbReference type="SMR" id="Q2JSF0"/>
<dbReference type="STRING" id="321327.CYA_2297"/>
<dbReference type="KEGG" id="cya:CYA_2297"/>
<dbReference type="eggNOG" id="COG0275">
    <property type="taxonomic scope" value="Bacteria"/>
</dbReference>
<dbReference type="HOGENOM" id="CLU_038422_3_0_3"/>
<dbReference type="OrthoDB" id="9806637at2"/>
<dbReference type="Proteomes" id="UP000008818">
    <property type="component" value="Chromosome"/>
</dbReference>
<dbReference type="GO" id="GO:0005737">
    <property type="term" value="C:cytoplasm"/>
    <property type="evidence" value="ECO:0007669"/>
    <property type="project" value="UniProtKB-SubCell"/>
</dbReference>
<dbReference type="GO" id="GO:0071424">
    <property type="term" value="F:rRNA (cytosine-N4-)-methyltransferase activity"/>
    <property type="evidence" value="ECO:0007669"/>
    <property type="project" value="UniProtKB-UniRule"/>
</dbReference>
<dbReference type="GO" id="GO:0070475">
    <property type="term" value="P:rRNA base methylation"/>
    <property type="evidence" value="ECO:0007669"/>
    <property type="project" value="UniProtKB-UniRule"/>
</dbReference>
<dbReference type="Gene3D" id="1.10.150.170">
    <property type="entry name" value="Putative methyltransferase TM0872, insert domain"/>
    <property type="match status" value="1"/>
</dbReference>
<dbReference type="Gene3D" id="3.40.50.150">
    <property type="entry name" value="Vaccinia Virus protein VP39"/>
    <property type="match status" value="1"/>
</dbReference>
<dbReference type="HAMAP" id="MF_01007">
    <property type="entry name" value="16SrRNA_methyltr_H"/>
    <property type="match status" value="1"/>
</dbReference>
<dbReference type="InterPro" id="IPR002903">
    <property type="entry name" value="RsmH"/>
</dbReference>
<dbReference type="InterPro" id="IPR023397">
    <property type="entry name" value="SAM-dep_MeTrfase_MraW_recog"/>
</dbReference>
<dbReference type="InterPro" id="IPR029063">
    <property type="entry name" value="SAM-dependent_MTases_sf"/>
</dbReference>
<dbReference type="NCBIfam" id="TIGR00006">
    <property type="entry name" value="16S rRNA (cytosine(1402)-N(4))-methyltransferase RsmH"/>
    <property type="match status" value="1"/>
</dbReference>
<dbReference type="PANTHER" id="PTHR11265:SF0">
    <property type="entry name" value="12S RRNA N4-METHYLCYTIDINE METHYLTRANSFERASE"/>
    <property type="match status" value="1"/>
</dbReference>
<dbReference type="PANTHER" id="PTHR11265">
    <property type="entry name" value="S-ADENOSYL-METHYLTRANSFERASE MRAW"/>
    <property type="match status" value="1"/>
</dbReference>
<dbReference type="Pfam" id="PF01795">
    <property type="entry name" value="Methyltransf_5"/>
    <property type="match status" value="1"/>
</dbReference>
<dbReference type="PIRSF" id="PIRSF004486">
    <property type="entry name" value="MraW"/>
    <property type="match status" value="1"/>
</dbReference>
<dbReference type="SUPFAM" id="SSF81799">
    <property type="entry name" value="Putative methyltransferase TM0872, insert domain"/>
    <property type="match status" value="1"/>
</dbReference>
<dbReference type="SUPFAM" id="SSF53335">
    <property type="entry name" value="S-adenosyl-L-methionine-dependent methyltransferases"/>
    <property type="match status" value="1"/>
</dbReference>
<accession>Q2JSF0</accession>